<dbReference type="EC" id="2.1.1.182" evidence="1"/>
<dbReference type="EMBL" id="CP001072">
    <property type="protein sequence ID" value="ACD48851.1"/>
    <property type="molecule type" value="Genomic_DNA"/>
</dbReference>
<dbReference type="RefSeq" id="WP_000259364.1">
    <property type="nucleotide sequence ID" value="NC_010698.2"/>
</dbReference>
<dbReference type="SMR" id="B2UVG9"/>
<dbReference type="KEGG" id="hps:HPSH_07290"/>
<dbReference type="HOGENOM" id="CLU_041220_0_2_7"/>
<dbReference type="GO" id="GO:0005829">
    <property type="term" value="C:cytosol"/>
    <property type="evidence" value="ECO:0007669"/>
    <property type="project" value="TreeGrafter"/>
</dbReference>
<dbReference type="GO" id="GO:0052908">
    <property type="term" value="F:16S rRNA (adenine(1518)-N(6)/adenine(1519)-N(6))-dimethyltransferase activity"/>
    <property type="evidence" value="ECO:0007669"/>
    <property type="project" value="UniProtKB-EC"/>
</dbReference>
<dbReference type="GO" id="GO:0003723">
    <property type="term" value="F:RNA binding"/>
    <property type="evidence" value="ECO:0007669"/>
    <property type="project" value="UniProtKB-KW"/>
</dbReference>
<dbReference type="FunFam" id="3.40.50.150:FF:000456">
    <property type="entry name" value="Ribosomal RNA small subunit methyltransferase A"/>
    <property type="match status" value="1"/>
</dbReference>
<dbReference type="Gene3D" id="1.10.8.100">
    <property type="entry name" value="Ribosomal RNA adenine dimethylase-like, domain 2"/>
    <property type="match status" value="1"/>
</dbReference>
<dbReference type="Gene3D" id="3.40.50.150">
    <property type="entry name" value="Vaccinia Virus protein VP39"/>
    <property type="match status" value="1"/>
</dbReference>
<dbReference type="HAMAP" id="MF_00607">
    <property type="entry name" value="16SrRNA_methyltr_A"/>
    <property type="match status" value="1"/>
</dbReference>
<dbReference type="InterPro" id="IPR001737">
    <property type="entry name" value="KsgA/Erm"/>
</dbReference>
<dbReference type="InterPro" id="IPR023165">
    <property type="entry name" value="rRNA_Ade_diMease-like_C"/>
</dbReference>
<dbReference type="InterPro" id="IPR020596">
    <property type="entry name" value="rRNA_Ade_Mease_Trfase_CS"/>
</dbReference>
<dbReference type="InterPro" id="IPR020598">
    <property type="entry name" value="rRNA_Ade_methylase_Trfase_N"/>
</dbReference>
<dbReference type="InterPro" id="IPR011530">
    <property type="entry name" value="rRNA_adenine_dimethylase"/>
</dbReference>
<dbReference type="InterPro" id="IPR029063">
    <property type="entry name" value="SAM-dependent_MTases_sf"/>
</dbReference>
<dbReference type="NCBIfam" id="TIGR00755">
    <property type="entry name" value="ksgA"/>
    <property type="match status" value="1"/>
</dbReference>
<dbReference type="PANTHER" id="PTHR11727">
    <property type="entry name" value="DIMETHYLADENOSINE TRANSFERASE"/>
    <property type="match status" value="1"/>
</dbReference>
<dbReference type="PANTHER" id="PTHR11727:SF7">
    <property type="entry name" value="DIMETHYLADENOSINE TRANSFERASE-RELATED"/>
    <property type="match status" value="1"/>
</dbReference>
<dbReference type="Pfam" id="PF00398">
    <property type="entry name" value="RrnaAD"/>
    <property type="match status" value="1"/>
</dbReference>
<dbReference type="SMART" id="SM00650">
    <property type="entry name" value="rADc"/>
    <property type="match status" value="1"/>
</dbReference>
<dbReference type="SUPFAM" id="SSF53335">
    <property type="entry name" value="S-adenosyl-L-methionine-dependent methyltransferases"/>
    <property type="match status" value="1"/>
</dbReference>
<dbReference type="PROSITE" id="PS01131">
    <property type="entry name" value="RRNA_A_DIMETH"/>
    <property type="match status" value="1"/>
</dbReference>
<dbReference type="PROSITE" id="PS51689">
    <property type="entry name" value="SAM_RNA_A_N6_MT"/>
    <property type="match status" value="1"/>
</dbReference>
<protein>
    <recommendedName>
        <fullName evidence="1">Ribosomal RNA small subunit methyltransferase A</fullName>
        <ecNumber evidence="1">2.1.1.182</ecNumber>
    </recommendedName>
    <alternativeName>
        <fullName evidence="1">16S rRNA (adenine(1518)-N(6)/adenine(1519)-N(6))-dimethyltransferase</fullName>
    </alternativeName>
    <alternativeName>
        <fullName evidence="1">16S rRNA dimethyladenosine transferase</fullName>
    </alternativeName>
    <alternativeName>
        <fullName evidence="1">16S rRNA dimethylase</fullName>
    </alternativeName>
    <alternativeName>
        <fullName evidence="1">S-adenosylmethionine-6-N', N'-adenosyl(rRNA) dimethyltransferase</fullName>
    </alternativeName>
</protein>
<sequence>MVVAKKSLGQHFLTDESFLDRIVDALPPLNPLKLIEIGVGLGDLTLKLLDHYPLKTYEIDSSLCEKMRSKLKAQKKPFALELVEKDALFLKEEEPYFLISNLPYYIATRLVLNALKDPKCRGLLVMAQKEVALKFCAKDSQNALSVLTQAIGNATLLFDVPPSAFSPPPKVFSSVFEVIKEPLKEKALASLLQAPFFEEALQKGFETLEDFLKACFSSPRKTLSNNLKKSVSYREKLDKVLDFLALENQPTSVRASEIKDYLKLLEYLLKG</sequence>
<accession>B2UVG9</accession>
<proteinExistence type="inferred from homology"/>
<comment type="function">
    <text evidence="1">Specifically dimethylates two adjacent adenosines (A1518 and A1519) in the loop of a conserved hairpin near the 3'-end of 16S rRNA in the 30S particle. May play a critical role in biogenesis of 30S subunits.</text>
</comment>
<comment type="catalytic activity">
    <reaction evidence="1">
        <text>adenosine(1518)/adenosine(1519) in 16S rRNA + 4 S-adenosyl-L-methionine = N(6)-dimethyladenosine(1518)/N(6)-dimethyladenosine(1519) in 16S rRNA + 4 S-adenosyl-L-homocysteine + 4 H(+)</text>
        <dbReference type="Rhea" id="RHEA:19609"/>
        <dbReference type="Rhea" id="RHEA-COMP:10232"/>
        <dbReference type="Rhea" id="RHEA-COMP:10233"/>
        <dbReference type="ChEBI" id="CHEBI:15378"/>
        <dbReference type="ChEBI" id="CHEBI:57856"/>
        <dbReference type="ChEBI" id="CHEBI:59789"/>
        <dbReference type="ChEBI" id="CHEBI:74411"/>
        <dbReference type="ChEBI" id="CHEBI:74493"/>
        <dbReference type="EC" id="2.1.1.182"/>
    </reaction>
</comment>
<comment type="subcellular location">
    <subcellularLocation>
        <location evidence="1">Cytoplasm</location>
    </subcellularLocation>
</comment>
<comment type="similarity">
    <text evidence="1">Belongs to the class I-like SAM-binding methyltransferase superfamily. rRNA adenine N(6)-methyltransferase family. RsmA subfamily.</text>
</comment>
<feature type="chain" id="PRO_1000130283" description="Ribosomal RNA small subunit methyltransferase A">
    <location>
        <begin position="1"/>
        <end position="271"/>
    </location>
</feature>
<feature type="binding site" evidence="1">
    <location>
        <position position="11"/>
    </location>
    <ligand>
        <name>S-adenosyl-L-methionine</name>
        <dbReference type="ChEBI" id="CHEBI:59789"/>
    </ligand>
</feature>
<feature type="binding site" evidence="1">
    <location>
        <position position="13"/>
    </location>
    <ligand>
        <name>S-adenosyl-L-methionine</name>
        <dbReference type="ChEBI" id="CHEBI:59789"/>
    </ligand>
</feature>
<feature type="binding site" evidence="1">
    <location>
        <position position="38"/>
    </location>
    <ligand>
        <name>S-adenosyl-L-methionine</name>
        <dbReference type="ChEBI" id="CHEBI:59789"/>
    </ligand>
</feature>
<feature type="binding site" evidence="1">
    <location>
        <position position="58"/>
    </location>
    <ligand>
        <name>S-adenosyl-L-methionine</name>
        <dbReference type="ChEBI" id="CHEBI:59789"/>
    </ligand>
</feature>
<feature type="binding site" evidence="1">
    <location>
        <position position="86"/>
    </location>
    <ligand>
        <name>S-adenosyl-L-methionine</name>
        <dbReference type="ChEBI" id="CHEBI:59789"/>
    </ligand>
</feature>
<feature type="binding site" evidence="1">
    <location>
        <position position="101"/>
    </location>
    <ligand>
        <name>S-adenosyl-L-methionine</name>
        <dbReference type="ChEBI" id="CHEBI:59789"/>
    </ligand>
</feature>
<gene>
    <name evidence="1" type="primary">rsmA</name>
    <name evidence="1" type="synonym">ksgA</name>
    <name type="ordered locus">HPSH_07290</name>
</gene>
<name>RSMA_HELPS</name>
<keyword id="KW-0963">Cytoplasm</keyword>
<keyword id="KW-0489">Methyltransferase</keyword>
<keyword id="KW-0694">RNA-binding</keyword>
<keyword id="KW-0698">rRNA processing</keyword>
<keyword id="KW-0949">S-adenosyl-L-methionine</keyword>
<keyword id="KW-0808">Transferase</keyword>
<evidence type="ECO:0000255" key="1">
    <source>
        <dbReference type="HAMAP-Rule" id="MF_00607"/>
    </source>
</evidence>
<organism>
    <name type="scientific">Helicobacter pylori (strain Shi470)</name>
    <dbReference type="NCBI Taxonomy" id="512562"/>
    <lineage>
        <taxon>Bacteria</taxon>
        <taxon>Pseudomonadati</taxon>
        <taxon>Campylobacterota</taxon>
        <taxon>Epsilonproteobacteria</taxon>
        <taxon>Campylobacterales</taxon>
        <taxon>Helicobacteraceae</taxon>
        <taxon>Helicobacter</taxon>
    </lineage>
</organism>
<reference key="1">
    <citation type="submission" date="2008-05" db="EMBL/GenBank/DDBJ databases">
        <title>Genome sequence of Helicobacter pylori from the remote Amazon: traces of Asian ancestry of the first Americans.</title>
        <authorList>
            <person name="Kersulyte D."/>
            <person name="Kalia A."/>
            <person name="Gilman R.H."/>
            <person name="Berg D.E."/>
        </authorList>
    </citation>
    <scope>NUCLEOTIDE SEQUENCE [LARGE SCALE GENOMIC DNA]</scope>
    <source>
        <strain>Shi470</strain>
    </source>
</reference>